<comment type="function">
    <text evidence="1">With CysN forms the ATP sulfurylase (ATPS) that catalyzes the adenylation of sulfate producing adenosine 5'-phosphosulfate (APS) and diphosphate, the first enzymatic step in sulfur assimilation pathway. APS synthesis involves the formation of a high-energy phosphoric-sulfuric acid anhydride bond driven by GTP hydrolysis by CysN coupled to ATP hydrolysis by CysD.</text>
</comment>
<comment type="catalytic activity">
    <reaction evidence="1">
        <text>sulfate + ATP + H(+) = adenosine 5'-phosphosulfate + diphosphate</text>
        <dbReference type="Rhea" id="RHEA:18133"/>
        <dbReference type="ChEBI" id="CHEBI:15378"/>
        <dbReference type="ChEBI" id="CHEBI:16189"/>
        <dbReference type="ChEBI" id="CHEBI:30616"/>
        <dbReference type="ChEBI" id="CHEBI:33019"/>
        <dbReference type="ChEBI" id="CHEBI:58243"/>
        <dbReference type="EC" id="2.7.7.4"/>
    </reaction>
</comment>
<comment type="pathway">
    <text evidence="1">Sulfur metabolism; hydrogen sulfide biosynthesis; sulfite from sulfate: step 1/3.</text>
</comment>
<comment type="subunit">
    <text evidence="1">Heterodimer composed of CysD, the smaller subunit, and CysN.</text>
</comment>
<comment type="similarity">
    <text evidence="1">Belongs to the PAPS reductase family. CysD subfamily.</text>
</comment>
<proteinExistence type="inferred from homology"/>
<reference key="1">
    <citation type="journal article" date="2008" name="J. Bacteriol.">
        <title>Insights into the environmental resistance gene pool from the genome sequence of the multidrug-resistant environmental isolate Escherichia coli SMS-3-5.</title>
        <authorList>
            <person name="Fricke W.F."/>
            <person name="Wright M.S."/>
            <person name="Lindell A.H."/>
            <person name="Harkins D.M."/>
            <person name="Baker-Austin C."/>
            <person name="Ravel J."/>
            <person name="Stepanauskas R."/>
        </authorList>
    </citation>
    <scope>NUCLEOTIDE SEQUENCE [LARGE SCALE GENOMIC DNA]</scope>
    <source>
        <strain>SMS-3-5 / SECEC</strain>
    </source>
</reference>
<feature type="chain" id="PRO_1000116960" description="Sulfate adenylyltransferase subunit 2">
    <location>
        <begin position="1"/>
        <end position="302"/>
    </location>
</feature>
<accession>B1LQ73</accession>
<organism>
    <name type="scientific">Escherichia coli (strain SMS-3-5 / SECEC)</name>
    <dbReference type="NCBI Taxonomy" id="439855"/>
    <lineage>
        <taxon>Bacteria</taxon>
        <taxon>Pseudomonadati</taxon>
        <taxon>Pseudomonadota</taxon>
        <taxon>Gammaproteobacteria</taxon>
        <taxon>Enterobacterales</taxon>
        <taxon>Enterobacteriaceae</taxon>
        <taxon>Escherichia</taxon>
    </lineage>
</organism>
<name>CYSD_ECOSM</name>
<dbReference type="EC" id="2.7.7.4" evidence="1"/>
<dbReference type="EMBL" id="CP000970">
    <property type="protein sequence ID" value="ACB15825.1"/>
    <property type="molecule type" value="Genomic_DNA"/>
</dbReference>
<dbReference type="RefSeq" id="WP_000372108.1">
    <property type="nucleotide sequence ID" value="NC_010498.1"/>
</dbReference>
<dbReference type="SMR" id="B1LQ73"/>
<dbReference type="GeneID" id="93779254"/>
<dbReference type="KEGG" id="ecm:EcSMS35_2878"/>
<dbReference type="HOGENOM" id="CLU_043026_0_0_6"/>
<dbReference type="UniPathway" id="UPA00140">
    <property type="reaction ID" value="UER00204"/>
</dbReference>
<dbReference type="Proteomes" id="UP000007011">
    <property type="component" value="Chromosome"/>
</dbReference>
<dbReference type="GO" id="GO:0005524">
    <property type="term" value="F:ATP binding"/>
    <property type="evidence" value="ECO:0007669"/>
    <property type="project" value="UniProtKB-KW"/>
</dbReference>
<dbReference type="GO" id="GO:0004781">
    <property type="term" value="F:sulfate adenylyltransferase (ATP) activity"/>
    <property type="evidence" value="ECO:0007669"/>
    <property type="project" value="UniProtKB-UniRule"/>
</dbReference>
<dbReference type="GO" id="GO:0070814">
    <property type="term" value="P:hydrogen sulfide biosynthetic process"/>
    <property type="evidence" value="ECO:0007669"/>
    <property type="project" value="UniProtKB-UniRule"/>
</dbReference>
<dbReference type="GO" id="GO:0000103">
    <property type="term" value="P:sulfate assimilation"/>
    <property type="evidence" value="ECO:0007669"/>
    <property type="project" value="UniProtKB-UniRule"/>
</dbReference>
<dbReference type="CDD" id="cd23946">
    <property type="entry name" value="Sulfate_adenylyltransferase_2"/>
    <property type="match status" value="1"/>
</dbReference>
<dbReference type="FunFam" id="3.40.50.620:FF:000002">
    <property type="entry name" value="Sulfate adenylyltransferase subunit 2"/>
    <property type="match status" value="1"/>
</dbReference>
<dbReference type="Gene3D" id="3.40.50.620">
    <property type="entry name" value="HUPs"/>
    <property type="match status" value="1"/>
</dbReference>
<dbReference type="HAMAP" id="MF_00064">
    <property type="entry name" value="Sulf_adenylyltr_sub2"/>
    <property type="match status" value="1"/>
</dbReference>
<dbReference type="InterPro" id="IPR002500">
    <property type="entry name" value="PAPS_reduct_dom"/>
</dbReference>
<dbReference type="InterPro" id="IPR014729">
    <property type="entry name" value="Rossmann-like_a/b/a_fold"/>
</dbReference>
<dbReference type="InterPro" id="IPR011784">
    <property type="entry name" value="SO4_adenylTrfase_ssu"/>
</dbReference>
<dbReference type="InterPro" id="IPR050128">
    <property type="entry name" value="Sulfate_adenylyltrnsfr_sub2"/>
</dbReference>
<dbReference type="NCBIfam" id="TIGR02039">
    <property type="entry name" value="CysD"/>
    <property type="match status" value="1"/>
</dbReference>
<dbReference type="NCBIfam" id="NF003587">
    <property type="entry name" value="PRK05253.1"/>
    <property type="match status" value="1"/>
</dbReference>
<dbReference type="NCBIfam" id="NF009214">
    <property type="entry name" value="PRK12563.1"/>
    <property type="match status" value="1"/>
</dbReference>
<dbReference type="PANTHER" id="PTHR43196">
    <property type="entry name" value="SULFATE ADENYLYLTRANSFERASE SUBUNIT 2"/>
    <property type="match status" value="1"/>
</dbReference>
<dbReference type="PANTHER" id="PTHR43196:SF1">
    <property type="entry name" value="SULFATE ADENYLYLTRANSFERASE SUBUNIT 2"/>
    <property type="match status" value="1"/>
</dbReference>
<dbReference type="Pfam" id="PF01507">
    <property type="entry name" value="PAPS_reduct"/>
    <property type="match status" value="1"/>
</dbReference>
<dbReference type="PIRSF" id="PIRSF002936">
    <property type="entry name" value="CysDAde_trans"/>
    <property type="match status" value="1"/>
</dbReference>
<dbReference type="SUPFAM" id="SSF52402">
    <property type="entry name" value="Adenine nucleotide alpha hydrolases-like"/>
    <property type="match status" value="1"/>
</dbReference>
<evidence type="ECO:0000255" key="1">
    <source>
        <dbReference type="HAMAP-Rule" id="MF_00064"/>
    </source>
</evidence>
<gene>
    <name evidence="1" type="primary">cysD</name>
    <name type="ordered locus">EcSMS35_2878</name>
</gene>
<protein>
    <recommendedName>
        <fullName evidence="1">Sulfate adenylyltransferase subunit 2</fullName>
        <ecNumber evidence="1">2.7.7.4</ecNumber>
    </recommendedName>
    <alternativeName>
        <fullName evidence="1">ATP-sulfurylase small subunit</fullName>
    </alternativeName>
    <alternativeName>
        <fullName evidence="1">Sulfate adenylate transferase</fullName>
        <shortName evidence="1">SAT</shortName>
    </alternativeName>
</protein>
<keyword id="KW-0067">ATP-binding</keyword>
<keyword id="KW-0547">Nucleotide-binding</keyword>
<keyword id="KW-0548">Nucleotidyltransferase</keyword>
<keyword id="KW-0808">Transferase</keyword>
<sequence>MDQIRLTHLRQLEAESIHIIREVAAEFSNPVMLYSIGKDSSVMLHLARKAFYPGTLPFPLLHVDTGWKFREMYEFRDRTAKAYGCELLVHKNPEGVAMGINPFVHGSAKHTDIMKTEGLKQALNKYGFDAAFGGARRDEEKSRAKERIYSFRDRFHRWDPKNQRPELWHNYNGQINKGESIRVFPLSNWTEQDIWQYIWLENIDIVPLYLAAERPVLERDGMLMMIDDNRIDLQPGEVIKKRMVRFRTLGCWPLTGAVESNAQTLPEIIEEMLVSTTSERQGRVIDRDQAGSMELKKRQGYF</sequence>